<protein>
    <recommendedName>
        <fullName>Cyclin-dependent kinase 18</fullName>
        <ecNumber>2.7.11.22</ecNumber>
    </recommendedName>
    <alternativeName>
        <fullName>Cell division protein kinase 18</fullName>
    </alternativeName>
    <alternativeName>
        <fullName>PCTAIRE-motif protein kinase 3</fullName>
    </alternativeName>
    <alternativeName>
        <fullName>Serine/threonine-protein kinase PCTAIRE-3</fullName>
    </alternativeName>
</protein>
<gene>
    <name type="primary">Cdk18</name>
    <name type="synonym">Pctaire3</name>
    <name type="synonym">Pctk3</name>
</gene>
<evidence type="ECO:0000250" key="1">
    <source>
        <dbReference type="UniProtKB" id="O35832"/>
    </source>
</evidence>
<evidence type="ECO:0000250" key="2">
    <source>
        <dbReference type="UniProtKB" id="Q07002"/>
    </source>
</evidence>
<evidence type="ECO:0000255" key="3">
    <source>
        <dbReference type="PROSITE-ProRule" id="PRU00159"/>
    </source>
</evidence>
<evidence type="ECO:0000255" key="4">
    <source>
        <dbReference type="PROSITE-ProRule" id="PRU10027"/>
    </source>
</evidence>
<evidence type="ECO:0000305" key="5"/>
<evidence type="ECO:0007744" key="6">
    <source>
    </source>
</evidence>
<evidence type="ECO:0007744" key="7">
    <source>
    </source>
</evidence>
<organism>
    <name type="scientific">Mus musculus</name>
    <name type="common">Mouse</name>
    <dbReference type="NCBI Taxonomy" id="10090"/>
    <lineage>
        <taxon>Eukaryota</taxon>
        <taxon>Metazoa</taxon>
        <taxon>Chordata</taxon>
        <taxon>Craniata</taxon>
        <taxon>Vertebrata</taxon>
        <taxon>Euteleostomi</taxon>
        <taxon>Mammalia</taxon>
        <taxon>Eutheria</taxon>
        <taxon>Euarchontoglires</taxon>
        <taxon>Glires</taxon>
        <taxon>Rodentia</taxon>
        <taxon>Myomorpha</taxon>
        <taxon>Muroidea</taxon>
        <taxon>Muridae</taxon>
        <taxon>Murinae</taxon>
        <taxon>Mus</taxon>
        <taxon>Mus</taxon>
    </lineage>
</organism>
<name>CDK18_MOUSE</name>
<feature type="chain" id="PRO_0000086491" description="Cyclin-dependent kinase 18">
    <location>
        <begin position="1"/>
        <end position="451"/>
    </location>
</feature>
<feature type="domain" description="Protein kinase" evidence="3">
    <location>
        <begin position="121"/>
        <end position="402"/>
    </location>
</feature>
<feature type="active site" description="Proton acceptor" evidence="3 4">
    <location>
        <position position="242"/>
    </location>
</feature>
<feature type="binding site" evidence="3">
    <location>
        <begin position="127"/>
        <end position="135"/>
    </location>
    <ligand>
        <name>ATP</name>
        <dbReference type="ChEBI" id="CHEBI:30616"/>
    </ligand>
</feature>
<feature type="binding site" evidence="3">
    <location>
        <position position="150"/>
    </location>
    <ligand>
        <name>ATP</name>
        <dbReference type="ChEBI" id="CHEBI:30616"/>
    </ligand>
</feature>
<feature type="modified residue" description="Phosphoserine" evidence="2">
    <location>
        <position position="12"/>
    </location>
</feature>
<feature type="modified residue" description="Phosphoserine" evidence="2">
    <location>
        <position position="51"/>
    </location>
</feature>
<feature type="modified residue" description="Phosphoserine" evidence="7">
    <location>
        <position position="66"/>
    </location>
</feature>
<feature type="modified residue" description="Phosphoserine" evidence="2">
    <location>
        <position position="75"/>
    </location>
</feature>
<feature type="modified residue" description="Phosphoserine" evidence="6 7">
    <location>
        <position position="109"/>
    </location>
</feature>
<feature type="modified residue" description="Phosphoserine" evidence="1">
    <location>
        <position position="417"/>
    </location>
</feature>
<feature type="modified residue" description="Phosphoserine" evidence="1">
    <location>
        <position position="420"/>
    </location>
</feature>
<proteinExistence type="evidence at protein level"/>
<keyword id="KW-0067">ATP-binding</keyword>
<keyword id="KW-0418">Kinase</keyword>
<keyword id="KW-0547">Nucleotide-binding</keyword>
<keyword id="KW-0597">Phosphoprotein</keyword>
<keyword id="KW-1185">Reference proteome</keyword>
<keyword id="KW-0723">Serine/threonine-protein kinase</keyword>
<keyword id="KW-0808">Transferase</keyword>
<dbReference type="EC" id="2.7.11.22"/>
<dbReference type="EMBL" id="X69026">
    <property type="protein sequence ID" value="CAA48788.1"/>
    <property type="molecule type" value="mRNA"/>
</dbReference>
<dbReference type="EMBL" id="AK004998">
    <property type="protein sequence ID" value="BAB23732.1"/>
    <property type="molecule type" value="mRNA"/>
</dbReference>
<dbReference type="CCDS" id="CCDS15281.1"/>
<dbReference type="PIR" id="S30436">
    <property type="entry name" value="S30436"/>
</dbReference>
<dbReference type="RefSeq" id="NP_032821.1">
    <property type="nucleotide sequence ID" value="NM_008795.2"/>
</dbReference>
<dbReference type="SMR" id="Q04899"/>
<dbReference type="BioGRID" id="202065">
    <property type="interactions" value="2"/>
</dbReference>
<dbReference type="FunCoup" id="Q04899">
    <property type="interactions" value="1299"/>
</dbReference>
<dbReference type="IntAct" id="Q04899">
    <property type="interactions" value="1"/>
</dbReference>
<dbReference type="MINT" id="Q04899"/>
<dbReference type="STRING" id="10090.ENSMUSP00000027697"/>
<dbReference type="GlyGen" id="Q04899">
    <property type="glycosylation" value="1 site, 1 O-linked glycan (1 site)"/>
</dbReference>
<dbReference type="iPTMnet" id="Q04899"/>
<dbReference type="PhosphoSitePlus" id="Q04899"/>
<dbReference type="jPOST" id="Q04899"/>
<dbReference type="PaxDb" id="10090-ENSMUSP00000027697"/>
<dbReference type="PeptideAtlas" id="Q04899"/>
<dbReference type="ProteomicsDB" id="281297"/>
<dbReference type="Pumba" id="Q04899"/>
<dbReference type="Antibodypedia" id="34567">
    <property type="antibodies" value="187 antibodies from 27 providers"/>
</dbReference>
<dbReference type="DNASU" id="18557"/>
<dbReference type="Ensembl" id="ENSMUST00000027697.12">
    <property type="protein sequence ID" value="ENSMUSP00000027697.6"/>
    <property type="gene ID" value="ENSMUSG00000026437.13"/>
</dbReference>
<dbReference type="GeneID" id="18557"/>
<dbReference type="KEGG" id="mmu:18557"/>
<dbReference type="UCSC" id="uc007coh.2">
    <property type="organism name" value="mouse"/>
</dbReference>
<dbReference type="AGR" id="MGI:97518"/>
<dbReference type="CTD" id="5129"/>
<dbReference type="MGI" id="MGI:97518">
    <property type="gene designation" value="Cdk18"/>
</dbReference>
<dbReference type="VEuPathDB" id="HostDB:ENSMUSG00000026437"/>
<dbReference type="eggNOG" id="KOG0594">
    <property type="taxonomic scope" value="Eukaryota"/>
</dbReference>
<dbReference type="GeneTree" id="ENSGT00940000159482"/>
<dbReference type="HOGENOM" id="CLU_000288_154_3_1"/>
<dbReference type="InParanoid" id="Q04899"/>
<dbReference type="OMA" id="PTSVHYR"/>
<dbReference type="OrthoDB" id="1732493at2759"/>
<dbReference type="PhylomeDB" id="Q04899"/>
<dbReference type="TreeFam" id="TF106508"/>
<dbReference type="BRENDA" id="2.7.11.22">
    <property type="organism ID" value="3474"/>
</dbReference>
<dbReference type="BioGRID-ORCS" id="18557">
    <property type="hits" value="2 hits in 79 CRISPR screens"/>
</dbReference>
<dbReference type="CD-CODE" id="CE726F99">
    <property type="entry name" value="Postsynaptic density"/>
</dbReference>
<dbReference type="ChiTaRS" id="Cdk18">
    <property type="organism name" value="mouse"/>
</dbReference>
<dbReference type="PRO" id="PR:Q04899"/>
<dbReference type="Proteomes" id="UP000000589">
    <property type="component" value="Chromosome 1"/>
</dbReference>
<dbReference type="RNAct" id="Q04899">
    <property type="molecule type" value="protein"/>
</dbReference>
<dbReference type="Bgee" id="ENSMUSG00000026437">
    <property type="expression patterns" value="Expressed in small intestine Peyer's patch and 152 other cell types or tissues"/>
</dbReference>
<dbReference type="ExpressionAtlas" id="Q04899">
    <property type="expression patterns" value="baseline and differential"/>
</dbReference>
<dbReference type="GO" id="GO:0005524">
    <property type="term" value="F:ATP binding"/>
    <property type="evidence" value="ECO:0007669"/>
    <property type="project" value="UniProtKB-KW"/>
</dbReference>
<dbReference type="GO" id="GO:0004693">
    <property type="term" value="F:cyclin-dependent protein serine/threonine kinase activity"/>
    <property type="evidence" value="ECO:0007669"/>
    <property type="project" value="UniProtKB-EC"/>
</dbReference>
<dbReference type="GO" id="GO:0106310">
    <property type="term" value="F:protein serine kinase activity"/>
    <property type="evidence" value="ECO:0007669"/>
    <property type="project" value="RHEA"/>
</dbReference>
<dbReference type="GO" id="GO:0031643">
    <property type="term" value="P:positive regulation of myelination"/>
    <property type="evidence" value="ECO:0007669"/>
    <property type="project" value="Ensembl"/>
</dbReference>
<dbReference type="FunFam" id="3.30.200.20:FF:000007">
    <property type="entry name" value="Cyclin-dependent kinase 14, putative"/>
    <property type="match status" value="1"/>
</dbReference>
<dbReference type="FunFam" id="1.10.510.10:FF:000061">
    <property type="entry name" value="Putative cyclin-dependent kinase 17"/>
    <property type="match status" value="1"/>
</dbReference>
<dbReference type="Gene3D" id="3.30.200.20">
    <property type="entry name" value="Phosphorylase Kinase, domain 1"/>
    <property type="match status" value="1"/>
</dbReference>
<dbReference type="Gene3D" id="1.10.510.10">
    <property type="entry name" value="Transferase(Phosphotransferase) domain 1"/>
    <property type="match status" value="1"/>
</dbReference>
<dbReference type="InterPro" id="IPR050108">
    <property type="entry name" value="CDK"/>
</dbReference>
<dbReference type="InterPro" id="IPR011009">
    <property type="entry name" value="Kinase-like_dom_sf"/>
</dbReference>
<dbReference type="InterPro" id="IPR000719">
    <property type="entry name" value="Prot_kinase_dom"/>
</dbReference>
<dbReference type="InterPro" id="IPR017441">
    <property type="entry name" value="Protein_kinase_ATP_BS"/>
</dbReference>
<dbReference type="InterPro" id="IPR008271">
    <property type="entry name" value="Ser/Thr_kinase_AS"/>
</dbReference>
<dbReference type="PANTHER" id="PTHR24056">
    <property type="entry name" value="CELL DIVISION PROTEIN KINASE"/>
    <property type="match status" value="1"/>
</dbReference>
<dbReference type="PANTHER" id="PTHR24056:SF52">
    <property type="entry name" value="CYCLIN-DEPENDENT KINASE 18"/>
    <property type="match status" value="1"/>
</dbReference>
<dbReference type="Pfam" id="PF00069">
    <property type="entry name" value="Pkinase"/>
    <property type="match status" value="1"/>
</dbReference>
<dbReference type="SMART" id="SM00220">
    <property type="entry name" value="S_TKc"/>
    <property type="match status" value="1"/>
</dbReference>
<dbReference type="SUPFAM" id="SSF56112">
    <property type="entry name" value="Protein kinase-like (PK-like)"/>
    <property type="match status" value="1"/>
</dbReference>
<dbReference type="PROSITE" id="PS00107">
    <property type="entry name" value="PROTEIN_KINASE_ATP"/>
    <property type="match status" value="1"/>
</dbReference>
<dbReference type="PROSITE" id="PS50011">
    <property type="entry name" value="PROTEIN_KINASE_DOM"/>
    <property type="match status" value="1"/>
</dbReference>
<dbReference type="PROSITE" id="PS00108">
    <property type="entry name" value="PROTEIN_KINASE_ST"/>
    <property type="match status" value="1"/>
</dbReference>
<reference key="1">
    <citation type="journal article" date="1992" name="Oncogene">
        <title>PCTAIRE-1 and PCTAIRE-3, two members of a novel cdc2/CDC28-related protein kinase gene family.</title>
        <authorList>
            <person name="Okuda T."/>
            <person name="Cleveland J.L."/>
            <person name="Downing J.R."/>
        </authorList>
    </citation>
    <scope>NUCLEOTIDE SEQUENCE [MRNA]</scope>
    <source>
        <tissue>Fibroblast</tissue>
    </source>
</reference>
<reference key="2">
    <citation type="journal article" date="2005" name="Science">
        <title>The transcriptional landscape of the mammalian genome.</title>
        <authorList>
            <person name="Carninci P."/>
            <person name="Kasukawa T."/>
            <person name="Katayama S."/>
            <person name="Gough J."/>
            <person name="Frith M.C."/>
            <person name="Maeda N."/>
            <person name="Oyama R."/>
            <person name="Ravasi T."/>
            <person name="Lenhard B."/>
            <person name="Wells C."/>
            <person name="Kodzius R."/>
            <person name="Shimokawa K."/>
            <person name="Bajic V.B."/>
            <person name="Brenner S.E."/>
            <person name="Batalov S."/>
            <person name="Forrest A.R."/>
            <person name="Zavolan M."/>
            <person name="Davis M.J."/>
            <person name="Wilming L.G."/>
            <person name="Aidinis V."/>
            <person name="Allen J.E."/>
            <person name="Ambesi-Impiombato A."/>
            <person name="Apweiler R."/>
            <person name="Aturaliya R.N."/>
            <person name="Bailey T.L."/>
            <person name="Bansal M."/>
            <person name="Baxter L."/>
            <person name="Beisel K.W."/>
            <person name="Bersano T."/>
            <person name="Bono H."/>
            <person name="Chalk A.M."/>
            <person name="Chiu K.P."/>
            <person name="Choudhary V."/>
            <person name="Christoffels A."/>
            <person name="Clutterbuck D.R."/>
            <person name="Crowe M.L."/>
            <person name="Dalla E."/>
            <person name="Dalrymple B.P."/>
            <person name="de Bono B."/>
            <person name="Della Gatta G."/>
            <person name="di Bernardo D."/>
            <person name="Down T."/>
            <person name="Engstrom P."/>
            <person name="Fagiolini M."/>
            <person name="Faulkner G."/>
            <person name="Fletcher C.F."/>
            <person name="Fukushima T."/>
            <person name="Furuno M."/>
            <person name="Futaki S."/>
            <person name="Gariboldi M."/>
            <person name="Georgii-Hemming P."/>
            <person name="Gingeras T.R."/>
            <person name="Gojobori T."/>
            <person name="Green R.E."/>
            <person name="Gustincich S."/>
            <person name="Harbers M."/>
            <person name="Hayashi Y."/>
            <person name="Hensch T.K."/>
            <person name="Hirokawa N."/>
            <person name="Hill D."/>
            <person name="Huminiecki L."/>
            <person name="Iacono M."/>
            <person name="Ikeo K."/>
            <person name="Iwama A."/>
            <person name="Ishikawa T."/>
            <person name="Jakt M."/>
            <person name="Kanapin A."/>
            <person name="Katoh M."/>
            <person name="Kawasawa Y."/>
            <person name="Kelso J."/>
            <person name="Kitamura H."/>
            <person name="Kitano H."/>
            <person name="Kollias G."/>
            <person name="Krishnan S.P."/>
            <person name="Kruger A."/>
            <person name="Kummerfeld S.K."/>
            <person name="Kurochkin I.V."/>
            <person name="Lareau L.F."/>
            <person name="Lazarevic D."/>
            <person name="Lipovich L."/>
            <person name="Liu J."/>
            <person name="Liuni S."/>
            <person name="McWilliam S."/>
            <person name="Madan Babu M."/>
            <person name="Madera M."/>
            <person name="Marchionni L."/>
            <person name="Matsuda H."/>
            <person name="Matsuzawa S."/>
            <person name="Miki H."/>
            <person name="Mignone F."/>
            <person name="Miyake S."/>
            <person name="Morris K."/>
            <person name="Mottagui-Tabar S."/>
            <person name="Mulder N."/>
            <person name="Nakano N."/>
            <person name="Nakauchi H."/>
            <person name="Ng P."/>
            <person name="Nilsson R."/>
            <person name="Nishiguchi S."/>
            <person name="Nishikawa S."/>
            <person name="Nori F."/>
            <person name="Ohara O."/>
            <person name="Okazaki Y."/>
            <person name="Orlando V."/>
            <person name="Pang K.C."/>
            <person name="Pavan W.J."/>
            <person name="Pavesi G."/>
            <person name="Pesole G."/>
            <person name="Petrovsky N."/>
            <person name="Piazza S."/>
            <person name="Reed J."/>
            <person name="Reid J.F."/>
            <person name="Ring B.Z."/>
            <person name="Ringwald M."/>
            <person name="Rost B."/>
            <person name="Ruan Y."/>
            <person name="Salzberg S.L."/>
            <person name="Sandelin A."/>
            <person name="Schneider C."/>
            <person name="Schoenbach C."/>
            <person name="Sekiguchi K."/>
            <person name="Semple C.A."/>
            <person name="Seno S."/>
            <person name="Sessa L."/>
            <person name="Sheng Y."/>
            <person name="Shibata Y."/>
            <person name="Shimada H."/>
            <person name="Shimada K."/>
            <person name="Silva D."/>
            <person name="Sinclair B."/>
            <person name="Sperling S."/>
            <person name="Stupka E."/>
            <person name="Sugiura K."/>
            <person name="Sultana R."/>
            <person name="Takenaka Y."/>
            <person name="Taki K."/>
            <person name="Tammoja K."/>
            <person name="Tan S.L."/>
            <person name="Tang S."/>
            <person name="Taylor M.S."/>
            <person name="Tegner J."/>
            <person name="Teichmann S.A."/>
            <person name="Ueda H.R."/>
            <person name="van Nimwegen E."/>
            <person name="Verardo R."/>
            <person name="Wei C.L."/>
            <person name="Yagi K."/>
            <person name="Yamanishi H."/>
            <person name="Zabarovsky E."/>
            <person name="Zhu S."/>
            <person name="Zimmer A."/>
            <person name="Hide W."/>
            <person name="Bult C."/>
            <person name="Grimmond S.M."/>
            <person name="Teasdale R.D."/>
            <person name="Liu E.T."/>
            <person name="Brusic V."/>
            <person name="Quackenbush J."/>
            <person name="Wahlestedt C."/>
            <person name="Mattick J.S."/>
            <person name="Hume D.A."/>
            <person name="Kai C."/>
            <person name="Sasaki D."/>
            <person name="Tomaru Y."/>
            <person name="Fukuda S."/>
            <person name="Kanamori-Katayama M."/>
            <person name="Suzuki M."/>
            <person name="Aoki J."/>
            <person name="Arakawa T."/>
            <person name="Iida J."/>
            <person name="Imamura K."/>
            <person name="Itoh M."/>
            <person name="Kato T."/>
            <person name="Kawaji H."/>
            <person name="Kawagashira N."/>
            <person name="Kawashima T."/>
            <person name="Kojima M."/>
            <person name="Kondo S."/>
            <person name="Konno H."/>
            <person name="Nakano K."/>
            <person name="Ninomiya N."/>
            <person name="Nishio T."/>
            <person name="Okada M."/>
            <person name="Plessy C."/>
            <person name="Shibata K."/>
            <person name="Shiraki T."/>
            <person name="Suzuki S."/>
            <person name="Tagami M."/>
            <person name="Waki K."/>
            <person name="Watahiki A."/>
            <person name="Okamura-Oho Y."/>
            <person name="Suzuki H."/>
            <person name="Kawai J."/>
            <person name="Hayashizaki Y."/>
        </authorList>
    </citation>
    <scope>NUCLEOTIDE SEQUENCE [LARGE SCALE MRNA]</scope>
    <source>
        <strain>C57BL/6J</strain>
        <tissue>Liver</tissue>
    </source>
</reference>
<reference key="3">
    <citation type="journal article" date="2009" name="Immunity">
        <title>The phagosomal proteome in interferon-gamma-activated macrophages.</title>
        <authorList>
            <person name="Trost M."/>
            <person name="English L."/>
            <person name="Lemieux S."/>
            <person name="Courcelles M."/>
            <person name="Desjardins M."/>
            <person name="Thibault P."/>
        </authorList>
    </citation>
    <scope>PHOSPHORYLATION [LARGE SCALE ANALYSIS] AT SER-109</scope>
    <scope>IDENTIFICATION BY MASS SPECTROMETRY [LARGE SCALE ANALYSIS]</scope>
</reference>
<reference key="4">
    <citation type="journal article" date="2010" name="Cell">
        <title>A tissue-specific atlas of mouse protein phosphorylation and expression.</title>
        <authorList>
            <person name="Huttlin E.L."/>
            <person name="Jedrychowski M.P."/>
            <person name="Elias J.E."/>
            <person name="Goswami T."/>
            <person name="Rad R."/>
            <person name="Beausoleil S.A."/>
            <person name="Villen J."/>
            <person name="Haas W."/>
            <person name="Sowa M.E."/>
            <person name="Gygi S.P."/>
        </authorList>
    </citation>
    <scope>PHOSPHORYLATION [LARGE SCALE ANALYSIS] AT SER-66 AND SER-109</scope>
    <scope>IDENTIFICATION BY MASS SPECTROMETRY [LARGE SCALE ANALYSIS]</scope>
    <source>
        <tissue>Brain</tissue>
        <tissue>Kidney</tissue>
        <tissue>Pancreas</tissue>
    </source>
</reference>
<comment type="function">
    <text>May play a role in signal transduction cascades in terminally differentiated cells.</text>
</comment>
<comment type="catalytic activity">
    <reaction>
        <text>L-seryl-[protein] + ATP = O-phospho-L-seryl-[protein] + ADP + H(+)</text>
        <dbReference type="Rhea" id="RHEA:17989"/>
        <dbReference type="Rhea" id="RHEA-COMP:9863"/>
        <dbReference type="Rhea" id="RHEA-COMP:11604"/>
        <dbReference type="ChEBI" id="CHEBI:15378"/>
        <dbReference type="ChEBI" id="CHEBI:29999"/>
        <dbReference type="ChEBI" id="CHEBI:30616"/>
        <dbReference type="ChEBI" id="CHEBI:83421"/>
        <dbReference type="ChEBI" id="CHEBI:456216"/>
        <dbReference type="EC" id="2.7.11.22"/>
    </reaction>
</comment>
<comment type="catalytic activity">
    <reaction>
        <text>L-threonyl-[protein] + ATP = O-phospho-L-threonyl-[protein] + ADP + H(+)</text>
        <dbReference type="Rhea" id="RHEA:46608"/>
        <dbReference type="Rhea" id="RHEA-COMP:11060"/>
        <dbReference type="Rhea" id="RHEA-COMP:11605"/>
        <dbReference type="ChEBI" id="CHEBI:15378"/>
        <dbReference type="ChEBI" id="CHEBI:30013"/>
        <dbReference type="ChEBI" id="CHEBI:30616"/>
        <dbReference type="ChEBI" id="CHEBI:61977"/>
        <dbReference type="ChEBI" id="CHEBI:456216"/>
        <dbReference type="EC" id="2.7.11.22"/>
    </reaction>
</comment>
<comment type="tissue specificity">
    <text>In brain, kidney, intestine and at a much lower level, in fetal tissues.</text>
</comment>
<comment type="similarity">
    <text evidence="5">Belongs to the protein kinase superfamily. CMGC Ser/Thr protein kinase family. CDC2/CDKX subfamily.</text>
</comment>
<comment type="caution">
    <text evidence="5">It is uncertain whether Met-1 or Met-4 is the initiator.</text>
</comment>
<sequence length="451" mass="51848">MNKMKNFKRRLSLSVPRPETIEESLAEFTEQFNQLHTQTNEDGTDEPEQLSPGMQYQQRQNQRRFSMEDLNKRLSLPMDIRLPQEFLQKLQLENPGLPKPLTRMSRRASLSDIGFGKLETYVKLDKLGEGTYATVFKGRSKLTENLVALKEIRLEHEEGAPCTAIREVSLLKDLKHANIVTLHDLIHTDRSLTLVFEYLDSDLKQYLDHCGNLMNMHNVKIFMFQLLRGLAYCHHRKILHRDLKPQNLLINERGELKLADFGLARAKSVPTKTYSNEVVTLWYRPPDVLLGSTEYSTPIDMWGVGCILYEMATGKPLFPGSTVKEELHLIFRLLGTPTEESWPGVTSISEFRAYNFPRYLPQPLLSHAPRLDTEGINLLSSLLLYESKSRMSAEAALNHPYFQSLGDRVHQLHDTASIFSLKEIQLQKDPGYRGLAFQHPGRGKSRRQSIF</sequence>
<accession>Q04899</accession>